<protein>
    <recommendedName>
        <fullName evidence="1">Large ribosomal subunit protein uL10</fullName>
    </recommendedName>
    <alternativeName>
        <fullName evidence="2">50S ribosomal protein L10</fullName>
    </alternativeName>
</protein>
<organism>
    <name type="scientific">Mesomycoplasma hyopneumoniae (strain 232)</name>
    <name type="common">Mycoplasma hyopneumoniae</name>
    <dbReference type="NCBI Taxonomy" id="295358"/>
    <lineage>
        <taxon>Bacteria</taxon>
        <taxon>Bacillati</taxon>
        <taxon>Mycoplasmatota</taxon>
        <taxon>Mycoplasmoidales</taxon>
        <taxon>Metamycoplasmataceae</taxon>
        <taxon>Mesomycoplasma</taxon>
    </lineage>
</organism>
<gene>
    <name evidence="1" type="primary">rplJ</name>
    <name type="ordered locus">mhp638</name>
</gene>
<accession>Q5ZZR9</accession>
<feature type="chain" id="PRO_0000154666" description="Large ribosomal subunit protein uL10">
    <location>
        <begin position="1"/>
        <end position="183"/>
    </location>
</feature>
<dbReference type="EMBL" id="AE017332">
    <property type="protein sequence ID" value="AAV28005.1"/>
    <property type="molecule type" value="Genomic_DNA"/>
</dbReference>
<dbReference type="SMR" id="Q5ZZR9"/>
<dbReference type="KEGG" id="mhy:mhp638"/>
<dbReference type="eggNOG" id="COG0244">
    <property type="taxonomic scope" value="Bacteria"/>
</dbReference>
<dbReference type="HOGENOM" id="CLU_092227_2_0_14"/>
<dbReference type="PhylomeDB" id="Q5ZZR9"/>
<dbReference type="Proteomes" id="UP000006822">
    <property type="component" value="Chromosome"/>
</dbReference>
<dbReference type="GO" id="GO:1990904">
    <property type="term" value="C:ribonucleoprotein complex"/>
    <property type="evidence" value="ECO:0007669"/>
    <property type="project" value="UniProtKB-KW"/>
</dbReference>
<dbReference type="GO" id="GO:0005840">
    <property type="term" value="C:ribosome"/>
    <property type="evidence" value="ECO:0007669"/>
    <property type="project" value="UniProtKB-KW"/>
</dbReference>
<dbReference type="GO" id="GO:0070180">
    <property type="term" value="F:large ribosomal subunit rRNA binding"/>
    <property type="evidence" value="ECO:0007669"/>
    <property type="project" value="UniProtKB-UniRule"/>
</dbReference>
<dbReference type="GO" id="GO:0006412">
    <property type="term" value="P:translation"/>
    <property type="evidence" value="ECO:0007669"/>
    <property type="project" value="UniProtKB-UniRule"/>
</dbReference>
<dbReference type="CDD" id="cd05797">
    <property type="entry name" value="Ribosomal_L10"/>
    <property type="match status" value="1"/>
</dbReference>
<dbReference type="Gene3D" id="3.30.70.1730">
    <property type="match status" value="1"/>
</dbReference>
<dbReference type="HAMAP" id="MF_00362">
    <property type="entry name" value="Ribosomal_uL10"/>
    <property type="match status" value="1"/>
</dbReference>
<dbReference type="InterPro" id="IPR001790">
    <property type="entry name" value="Ribosomal_uL10"/>
</dbReference>
<dbReference type="InterPro" id="IPR043141">
    <property type="entry name" value="Ribosomal_uL10-like_sf"/>
</dbReference>
<dbReference type="InterPro" id="IPR022973">
    <property type="entry name" value="Ribosomal_uL10_bac"/>
</dbReference>
<dbReference type="InterPro" id="IPR047865">
    <property type="entry name" value="Ribosomal_uL10_bac_type"/>
</dbReference>
<dbReference type="NCBIfam" id="NF000955">
    <property type="entry name" value="PRK00099.1-1"/>
    <property type="match status" value="1"/>
</dbReference>
<dbReference type="PANTHER" id="PTHR11560">
    <property type="entry name" value="39S RIBOSOMAL PROTEIN L10, MITOCHONDRIAL"/>
    <property type="match status" value="1"/>
</dbReference>
<dbReference type="Pfam" id="PF00466">
    <property type="entry name" value="Ribosomal_L10"/>
    <property type="match status" value="1"/>
</dbReference>
<dbReference type="SUPFAM" id="SSF160369">
    <property type="entry name" value="Ribosomal protein L10-like"/>
    <property type="match status" value="1"/>
</dbReference>
<sequence length="183" mass="20168">MNVSFSIAPYFFKERRAKLNSFRKRKVEIVAEIDSLLKNSSSLAIVEYRGLTVNELEQLRKEFKSAGVLSKVYKNRLFKIAAENNGYLDLQTDLVGPNLFAFGTTDAIAPAKIIAKNAKEQPLLILKGGIYDNQVVSAAENALISALPSYTEALTMLASGLQSPLKQLAFGLKLLIDEQKITA</sequence>
<name>RL10_MESH2</name>
<reference key="1">
    <citation type="journal article" date="2004" name="J. Bacteriol.">
        <title>The genome sequence of Mycoplasma hyopneumoniae strain 232, the agent of swine mycoplasmosis.</title>
        <authorList>
            <person name="Minion F.C."/>
            <person name="Lefkowitz E.J."/>
            <person name="Madsen M.L."/>
            <person name="Cleary B.J."/>
            <person name="Swartzell S.M."/>
            <person name="Mahairas G.G."/>
        </authorList>
    </citation>
    <scope>NUCLEOTIDE SEQUENCE [LARGE SCALE GENOMIC DNA]</scope>
    <source>
        <strain>232</strain>
    </source>
</reference>
<comment type="function">
    <text evidence="1">Forms part of the ribosomal stalk, playing a central role in the interaction of the ribosome with GTP-bound translation factors.</text>
</comment>
<comment type="subunit">
    <text evidence="1">Part of the ribosomal stalk of the 50S ribosomal subunit. The N-terminus interacts with L11 and the large rRNA to form the base of the stalk. The C-terminus forms an elongated spine to which L12 dimers bind in a sequential fashion forming a multimeric L10(L12)X complex.</text>
</comment>
<comment type="similarity">
    <text evidence="1">Belongs to the universal ribosomal protein uL10 family.</text>
</comment>
<evidence type="ECO:0000255" key="1">
    <source>
        <dbReference type="HAMAP-Rule" id="MF_00362"/>
    </source>
</evidence>
<evidence type="ECO:0000305" key="2"/>
<proteinExistence type="inferred from homology"/>
<keyword id="KW-0687">Ribonucleoprotein</keyword>
<keyword id="KW-0689">Ribosomal protein</keyword>
<keyword id="KW-0694">RNA-binding</keyword>
<keyword id="KW-0699">rRNA-binding</keyword>